<accession>Q1R9D6</accession>
<sequence length="180" mass="20538">MTLKELLVGFGTQVRSIWMIGLHAFAKRETRMYPEEPVYLPPRYRGRIVLTRDPDGEERCVACNLCAVACPVGCISLQKAETKDGRWYPEFFRINFSRCIFCGLCEEACPTTAIQLTPDFEMGEYKRQDLVYEKEDLLISGPGKYPEYNFYRMAGMAIDGKDKGEAENEAKPIDVKSLLP</sequence>
<feature type="chain" id="PRO_0000250906" description="NADH-quinone oxidoreductase subunit I">
    <location>
        <begin position="1"/>
        <end position="180"/>
    </location>
</feature>
<feature type="domain" description="4Fe-4S ferredoxin-type 1" evidence="1">
    <location>
        <begin position="50"/>
        <end position="80"/>
    </location>
</feature>
<feature type="domain" description="4Fe-4S ferredoxin-type 2" evidence="1">
    <location>
        <begin position="90"/>
        <end position="119"/>
    </location>
</feature>
<feature type="binding site" evidence="1">
    <location>
        <position position="60"/>
    </location>
    <ligand>
        <name>[4Fe-4S] cluster</name>
        <dbReference type="ChEBI" id="CHEBI:49883"/>
        <label>1</label>
    </ligand>
</feature>
<feature type="binding site" evidence="1">
    <location>
        <position position="63"/>
    </location>
    <ligand>
        <name>[4Fe-4S] cluster</name>
        <dbReference type="ChEBI" id="CHEBI:49883"/>
        <label>1</label>
    </ligand>
</feature>
<feature type="binding site" evidence="1">
    <location>
        <position position="66"/>
    </location>
    <ligand>
        <name>[4Fe-4S] cluster</name>
        <dbReference type="ChEBI" id="CHEBI:49883"/>
        <label>1</label>
    </ligand>
</feature>
<feature type="binding site" evidence="1">
    <location>
        <position position="70"/>
    </location>
    <ligand>
        <name>[4Fe-4S] cluster</name>
        <dbReference type="ChEBI" id="CHEBI:49883"/>
        <label>2</label>
    </ligand>
</feature>
<feature type="binding site" evidence="1">
    <location>
        <position position="99"/>
    </location>
    <ligand>
        <name>[4Fe-4S] cluster</name>
        <dbReference type="ChEBI" id="CHEBI:49883"/>
        <label>2</label>
    </ligand>
</feature>
<feature type="binding site" evidence="1">
    <location>
        <position position="102"/>
    </location>
    <ligand>
        <name>[4Fe-4S] cluster</name>
        <dbReference type="ChEBI" id="CHEBI:49883"/>
        <label>2</label>
    </ligand>
</feature>
<feature type="binding site" evidence="1">
    <location>
        <position position="105"/>
    </location>
    <ligand>
        <name>[4Fe-4S] cluster</name>
        <dbReference type="ChEBI" id="CHEBI:49883"/>
        <label>2</label>
    </ligand>
</feature>
<feature type="binding site" evidence="1">
    <location>
        <position position="109"/>
    </location>
    <ligand>
        <name>[4Fe-4S] cluster</name>
        <dbReference type="ChEBI" id="CHEBI:49883"/>
        <label>1</label>
    </ligand>
</feature>
<proteinExistence type="inferred from homology"/>
<keyword id="KW-0004">4Fe-4S</keyword>
<keyword id="KW-0997">Cell inner membrane</keyword>
<keyword id="KW-1003">Cell membrane</keyword>
<keyword id="KW-0408">Iron</keyword>
<keyword id="KW-0411">Iron-sulfur</keyword>
<keyword id="KW-0472">Membrane</keyword>
<keyword id="KW-0479">Metal-binding</keyword>
<keyword id="KW-0520">NAD</keyword>
<keyword id="KW-0874">Quinone</keyword>
<keyword id="KW-0677">Repeat</keyword>
<keyword id="KW-1278">Translocase</keyword>
<keyword id="KW-0830">Ubiquinone</keyword>
<comment type="function">
    <text evidence="1">NDH-1 shuttles electrons from NADH, via FMN and iron-sulfur (Fe-S) centers, to quinones in the respiratory chain. The immediate electron acceptor for the enzyme in this species is believed to be ubiquinone. Couples the redox reaction to proton translocation (for every two electrons transferred, four hydrogen ions are translocated across the cytoplasmic membrane), and thus conserves the redox energy in a proton gradient.</text>
</comment>
<comment type="catalytic activity">
    <reaction evidence="1">
        <text>a quinone + NADH + 5 H(+)(in) = a quinol + NAD(+) + 4 H(+)(out)</text>
        <dbReference type="Rhea" id="RHEA:57888"/>
        <dbReference type="ChEBI" id="CHEBI:15378"/>
        <dbReference type="ChEBI" id="CHEBI:24646"/>
        <dbReference type="ChEBI" id="CHEBI:57540"/>
        <dbReference type="ChEBI" id="CHEBI:57945"/>
        <dbReference type="ChEBI" id="CHEBI:132124"/>
    </reaction>
</comment>
<comment type="cofactor">
    <cofactor evidence="1">
        <name>[4Fe-4S] cluster</name>
        <dbReference type="ChEBI" id="CHEBI:49883"/>
    </cofactor>
    <text evidence="1">Binds 2 [4Fe-4S] clusters per subunit.</text>
</comment>
<comment type="subunit">
    <text evidence="1">NDH-1 is composed of 13 different subunits. Subunits NuoA, H, J, K, L, M, N constitute the membrane sector of the complex.</text>
</comment>
<comment type="subcellular location">
    <subcellularLocation>
        <location evidence="1">Cell inner membrane</location>
        <topology evidence="1">Peripheral membrane protein</topology>
    </subcellularLocation>
</comment>
<comment type="similarity">
    <text evidence="1">Belongs to the complex I 23 kDa subunit family.</text>
</comment>
<protein>
    <recommendedName>
        <fullName evidence="1">NADH-quinone oxidoreductase subunit I</fullName>
        <ecNumber evidence="1">7.1.1.-</ecNumber>
    </recommendedName>
    <alternativeName>
        <fullName evidence="1">NADH dehydrogenase I subunit I</fullName>
    </alternativeName>
    <alternativeName>
        <fullName evidence="1">NDH-1 subunit I</fullName>
    </alternativeName>
</protein>
<name>NUOI_ECOUT</name>
<reference key="1">
    <citation type="journal article" date="2006" name="Proc. Natl. Acad. Sci. U.S.A.">
        <title>Identification of genes subject to positive selection in uropathogenic strains of Escherichia coli: a comparative genomics approach.</title>
        <authorList>
            <person name="Chen S.L."/>
            <person name="Hung C.-S."/>
            <person name="Xu J."/>
            <person name="Reigstad C.S."/>
            <person name="Magrini V."/>
            <person name="Sabo A."/>
            <person name="Blasiar D."/>
            <person name="Bieri T."/>
            <person name="Meyer R.R."/>
            <person name="Ozersky P."/>
            <person name="Armstrong J.R."/>
            <person name="Fulton R.S."/>
            <person name="Latreille J.P."/>
            <person name="Spieth J."/>
            <person name="Hooton T.M."/>
            <person name="Mardis E.R."/>
            <person name="Hultgren S.J."/>
            <person name="Gordon J.I."/>
        </authorList>
    </citation>
    <scope>NUCLEOTIDE SEQUENCE [LARGE SCALE GENOMIC DNA]</scope>
    <source>
        <strain>UTI89 / UPEC</strain>
    </source>
</reference>
<organism>
    <name type="scientific">Escherichia coli (strain UTI89 / UPEC)</name>
    <dbReference type="NCBI Taxonomy" id="364106"/>
    <lineage>
        <taxon>Bacteria</taxon>
        <taxon>Pseudomonadati</taxon>
        <taxon>Pseudomonadota</taxon>
        <taxon>Gammaproteobacteria</taxon>
        <taxon>Enterobacterales</taxon>
        <taxon>Enterobacteriaceae</taxon>
        <taxon>Escherichia</taxon>
    </lineage>
</organism>
<evidence type="ECO:0000255" key="1">
    <source>
        <dbReference type="HAMAP-Rule" id="MF_01351"/>
    </source>
</evidence>
<gene>
    <name evidence="1" type="primary">nuoI</name>
    <name type="ordered locus">UTI89_C2561</name>
</gene>
<dbReference type="EC" id="7.1.1.-" evidence="1"/>
<dbReference type="EMBL" id="CP000243">
    <property type="protein sequence ID" value="ABE08028.1"/>
    <property type="molecule type" value="Genomic_DNA"/>
</dbReference>
<dbReference type="RefSeq" id="WP_000172749.1">
    <property type="nucleotide sequence ID" value="NZ_CP064825.1"/>
</dbReference>
<dbReference type="SMR" id="Q1R9D6"/>
<dbReference type="GeneID" id="89517116"/>
<dbReference type="KEGG" id="eci:UTI89_C2561"/>
<dbReference type="HOGENOM" id="CLU_067218_4_3_6"/>
<dbReference type="Proteomes" id="UP000001952">
    <property type="component" value="Chromosome"/>
</dbReference>
<dbReference type="GO" id="GO:0005886">
    <property type="term" value="C:plasma membrane"/>
    <property type="evidence" value="ECO:0007669"/>
    <property type="project" value="UniProtKB-SubCell"/>
</dbReference>
<dbReference type="GO" id="GO:0051539">
    <property type="term" value="F:4 iron, 4 sulfur cluster binding"/>
    <property type="evidence" value="ECO:0007669"/>
    <property type="project" value="UniProtKB-KW"/>
</dbReference>
<dbReference type="GO" id="GO:0005506">
    <property type="term" value="F:iron ion binding"/>
    <property type="evidence" value="ECO:0007669"/>
    <property type="project" value="UniProtKB-UniRule"/>
</dbReference>
<dbReference type="GO" id="GO:0050136">
    <property type="term" value="F:NADH:ubiquinone reductase (non-electrogenic) activity"/>
    <property type="evidence" value="ECO:0007669"/>
    <property type="project" value="UniProtKB-UniRule"/>
</dbReference>
<dbReference type="GO" id="GO:0048038">
    <property type="term" value="F:quinone binding"/>
    <property type="evidence" value="ECO:0007669"/>
    <property type="project" value="UniProtKB-KW"/>
</dbReference>
<dbReference type="GO" id="GO:0009060">
    <property type="term" value="P:aerobic respiration"/>
    <property type="evidence" value="ECO:0007669"/>
    <property type="project" value="TreeGrafter"/>
</dbReference>
<dbReference type="FunFam" id="3.30.70.3270:FF:000002">
    <property type="entry name" value="NADH-quinone oxidoreductase subunit I"/>
    <property type="match status" value="1"/>
</dbReference>
<dbReference type="Gene3D" id="3.30.70.3270">
    <property type="match status" value="1"/>
</dbReference>
<dbReference type="HAMAP" id="MF_01351">
    <property type="entry name" value="NDH1_NuoI"/>
    <property type="match status" value="1"/>
</dbReference>
<dbReference type="InterPro" id="IPR017896">
    <property type="entry name" value="4Fe4S_Fe-S-bd"/>
</dbReference>
<dbReference type="InterPro" id="IPR017900">
    <property type="entry name" value="4Fe4S_Fe_S_CS"/>
</dbReference>
<dbReference type="InterPro" id="IPR010226">
    <property type="entry name" value="NADH_quinone_OxRdtase_chainI"/>
</dbReference>
<dbReference type="NCBIfam" id="TIGR01971">
    <property type="entry name" value="NuoI"/>
    <property type="match status" value="1"/>
</dbReference>
<dbReference type="NCBIfam" id="NF004536">
    <property type="entry name" value="PRK05888.1-1"/>
    <property type="match status" value="1"/>
</dbReference>
<dbReference type="PANTHER" id="PTHR10849:SF20">
    <property type="entry name" value="NADH DEHYDROGENASE [UBIQUINONE] IRON-SULFUR PROTEIN 8, MITOCHONDRIAL"/>
    <property type="match status" value="1"/>
</dbReference>
<dbReference type="PANTHER" id="PTHR10849">
    <property type="entry name" value="NADH DEHYDROGENASE UBIQUINONE IRON-SULFUR PROTEIN 8, MITOCHONDRIAL"/>
    <property type="match status" value="1"/>
</dbReference>
<dbReference type="Pfam" id="PF12838">
    <property type="entry name" value="Fer4_7"/>
    <property type="match status" value="1"/>
</dbReference>
<dbReference type="SUPFAM" id="SSF54862">
    <property type="entry name" value="4Fe-4S ferredoxins"/>
    <property type="match status" value="1"/>
</dbReference>
<dbReference type="PROSITE" id="PS00198">
    <property type="entry name" value="4FE4S_FER_1"/>
    <property type="match status" value="2"/>
</dbReference>
<dbReference type="PROSITE" id="PS51379">
    <property type="entry name" value="4FE4S_FER_2"/>
    <property type="match status" value="2"/>
</dbReference>